<evidence type="ECO:0000255" key="1">
    <source>
        <dbReference type="HAMAP-Rule" id="MF_00484"/>
    </source>
</evidence>
<organism>
    <name type="scientific">Klebsiella pneumoniae subsp. pneumoniae (strain ATCC 700721 / MGH 78578)</name>
    <dbReference type="NCBI Taxonomy" id="272620"/>
    <lineage>
        <taxon>Bacteria</taxon>
        <taxon>Pseudomonadati</taxon>
        <taxon>Pseudomonadota</taxon>
        <taxon>Gammaproteobacteria</taxon>
        <taxon>Enterobacterales</taxon>
        <taxon>Enterobacteriaceae</taxon>
        <taxon>Klebsiella/Raoultella group</taxon>
        <taxon>Klebsiella</taxon>
        <taxon>Klebsiella pneumoniae complex</taxon>
    </lineage>
</organism>
<sequence length="477" mass="53005">MQVLHVCSEMFPLLKTGGLADVIGALPAAQIAEGIDTRVLLPAFPDIRRGVVDAQVVTRRDTFAGRITLLYGHFNGVGIYLIDAPHLYDRPGSPYHDTNQHAYPDNVLRFALLGWVGSEMASGLDPFWRPDVVHAHDWHAGLTPAYLAARGRPAKSVFTVHNLAYQGMFYSWHMNDIELPWSFYNMHGLEFNGQISFLKAGLYYADHITAVSPTYAREITEPQYAYGMEGLLRQRHHEGRLSGILNGVDDGIWSPQNDLLLPMRYDRDTLEEKAENKRQLQIAMGLKVDDKAPLFAVVSRLTSQKGLDLVLEALPGLLEQGGQLALLGAGDPVLQEGFLAAAAEHPGKVGVQIGYHEAFSHRIMGGADVILVPSRFEPCGLTQLYGLKYGTLPLVRRTGGLADTVADSSLENLADGLATGFVFEDSNALSLLRAIRRAFVLWSRPSLWRYVQRQAMNMDFSWQVAANSYRELYQRLM</sequence>
<gene>
    <name evidence="1" type="primary">glgA</name>
    <name type="ordered locus">KPN78578_37580</name>
    <name type="ORF">KPN_03795</name>
</gene>
<protein>
    <recommendedName>
        <fullName evidence="1">Glycogen synthase</fullName>
        <ecNumber evidence="1">2.4.1.21</ecNumber>
    </recommendedName>
    <alternativeName>
        <fullName evidence="1">Starch [bacterial glycogen] synthase</fullName>
    </alternativeName>
</protein>
<feature type="chain" id="PRO_1000014366" description="Glycogen synthase">
    <location>
        <begin position="1"/>
        <end position="477"/>
    </location>
</feature>
<feature type="binding site" evidence="1">
    <location>
        <position position="15"/>
    </location>
    <ligand>
        <name>ADP-alpha-D-glucose</name>
        <dbReference type="ChEBI" id="CHEBI:57498"/>
    </ligand>
</feature>
<proteinExistence type="inferred from homology"/>
<reference key="1">
    <citation type="submission" date="2006-09" db="EMBL/GenBank/DDBJ databases">
        <authorList>
            <consortium name="The Klebsiella pneumonia Genome Sequencing Project"/>
            <person name="McClelland M."/>
            <person name="Sanderson E.K."/>
            <person name="Spieth J."/>
            <person name="Clifton W.S."/>
            <person name="Latreille P."/>
            <person name="Sabo A."/>
            <person name="Pepin K."/>
            <person name="Bhonagiri V."/>
            <person name="Porwollik S."/>
            <person name="Ali J."/>
            <person name="Wilson R.K."/>
        </authorList>
    </citation>
    <scope>NUCLEOTIDE SEQUENCE [LARGE SCALE GENOMIC DNA]</scope>
    <source>
        <strain>ATCC 700721 / MGH 78578</strain>
    </source>
</reference>
<accession>A6TF48</accession>
<comment type="function">
    <text evidence="1">Synthesizes alpha-1,4-glucan chains using ADP-glucose.</text>
</comment>
<comment type="catalytic activity">
    <reaction evidence="1">
        <text>[(1-&gt;4)-alpha-D-glucosyl](n) + ADP-alpha-D-glucose = [(1-&gt;4)-alpha-D-glucosyl](n+1) + ADP + H(+)</text>
        <dbReference type="Rhea" id="RHEA:18189"/>
        <dbReference type="Rhea" id="RHEA-COMP:9584"/>
        <dbReference type="Rhea" id="RHEA-COMP:9587"/>
        <dbReference type="ChEBI" id="CHEBI:15378"/>
        <dbReference type="ChEBI" id="CHEBI:15444"/>
        <dbReference type="ChEBI" id="CHEBI:57498"/>
        <dbReference type="ChEBI" id="CHEBI:456216"/>
        <dbReference type="EC" id="2.4.1.21"/>
    </reaction>
</comment>
<comment type="pathway">
    <text evidence="1">Glycan biosynthesis; glycogen biosynthesis.</text>
</comment>
<comment type="similarity">
    <text evidence="1">Belongs to the glycosyltransferase 1 family. Bacterial/plant glycogen synthase subfamily.</text>
</comment>
<keyword id="KW-0320">Glycogen biosynthesis</keyword>
<keyword id="KW-0328">Glycosyltransferase</keyword>
<keyword id="KW-0808">Transferase</keyword>
<name>GLGA_KLEP7</name>
<dbReference type="EC" id="2.4.1.21" evidence="1"/>
<dbReference type="EMBL" id="CP000647">
    <property type="protein sequence ID" value="ABR79182.1"/>
    <property type="molecule type" value="Genomic_DNA"/>
</dbReference>
<dbReference type="RefSeq" id="WP_002920564.1">
    <property type="nucleotide sequence ID" value="NC_009648.1"/>
</dbReference>
<dbReference type="SMR" id="A6TF48"/>
<dbReference type="STRING" id="272620.KPN_03795"/>
<dbReference type="CAZy" id="GT5">
    <property type="family name" value="Glycosyltransferase Family 5"/>
</dbReference>
<dbReference type="PaxDb" id="272620-KPN_03795"/>
<dbReference type="EnsemblBacteria" id="ABR79182">
    <property type="protein sequence ID" value="ABR79182"/>
    <property type="gene ID" value="KPN_03795"/>
</dbReference>
<dbReference type="KEGG" id="kpn:KPN_03795"/>
<dbReference type="HOGENOM" id="CLU_009583_18_2_6"/>
<dbReference type="UniPathway" id="UPA00164"/>
<dbReference type="Proteomes" id="UP000000265">
    <property type="component" value="Chromosome"/>
</dbReference>
<dbReference type="GO" id="GO:0005829">
    <property type="term" value="C:cytosol"/>
    <property type="evidence" value="ECO:0007669"/>
    <property type="project" value="TreeGrafter"/>
</dbReference>
<dbReference type="GO" id="GO:0009011">
    <property type="term" value="F:alpha-1,4-glucan glucosyltransferase (ADP-glucose donor) activity"/>
    <property type="evidence" value="ECO:0007669"/>
    <property type="project" value="UniProtKB-UniRule"/>
</dbReference>
<dbReference type="GO" id="GO:0004373">
    <property type="term" value="F:alpha-1,4-glucan glucosyltransferase (UDP-glucose donor) activity"/>
    <property type="evidence" value="ECO:0007669"/>
    <property type="project" value="InterPro"/>
</dbReference>
<dbReference type="GO" id="GO:0005978">
    <property type="term" value="P:glycogen biosynthetic process"/>
    <property type="evidence" value="ECO:0007669"/>
    <property type="project" value="UniProtKB-UniRule"/>
</dbReference>
<dbReference type="CDD" id="cd03791">
    <property type="entry name" value="GT5_Glycogen_synthase_DULL1-like"/>
    <property type="match status" value="1"/>
</dbReference>
<dbReference type="FunFam" id="3.40.50.2000:FF:000008">
    <property type="entry name" value="Glycogen synthase"/>
    <property type="match status" value="1"/>
</dbReference>
<dbReference type="FunFam" id="3.40.50.2000:FF:000011">
    <property type="entry name" value="Glycogen synthase"/>
    <property type="match status" value="1"/>
</dbReference>
<dbReference type="Gene3D" id="3.40.50.2000">
    <property type="entry name" value="Glycogen Phosphorylase B"/>
    <property type="match status" value="2"/>
</dbReference>
<dbReference type="HAMAP" id="MF_00484">
    <property type="entry name" value="Glycogen_synth"/>
    <property type="match status" value="1"/>
</dbReference>
<dbReference type="InterPro" id="IPR001296">
    <property type="entry name" value="Glyco_trans_1"/>
</dbReference>
<dbReference type="InterPro" id="IPR011835">
    <property type="entry name" value="GS/SS"/>
</dbReference>
<dbReference type="InterPro" id="IPR013534">
    <property type="entry name" value="Starch_synth_cat_dom"/>
</dbReference>
<dbReference type="NCBIfam" id="TIGR02095">
    <property type="entry name" value="glgA"/>
    <property type="match status" value="1"/>
</dbReference>
<dbReference type="NCBIfam" id="NF001899">
    <property type="entry name" value="PRK00654.1-2"/>
    <property type="match status" value="1"/>
</dbReference>
<dbReference type="PANTHER" id="PTHR45825:SF11">
    <property type="entry name" value="ALPHA AMYLASE DOMAIN-CONTAINING PROTEIN"/>
    <property type="match status" value="1"/>
</dbReference>
<dbReference type="PANTHER" id="PTHR45825">
    <property type="entry name" value="GRANULE-BOUND STARCH SYNTHASE 1, CHLOROPLASTIC/AMYLOPLASTIC"/>
    <property type="match status" value="1"/>
</dbReference>
<dbReference type="Pfam" id="PF08323">
    <property type="entry name" value="Glyco_transf_5"/>
    <property type="match status" value="1"/>
</dbReference>
<dbReference type="Pfam" id="PF00534">
    <property type="entry name" value="Glycos_transf_1"/>
    <property type="match status" value="1"/>
</dbReference>
<dbReference type="SUPFAM" id="SSF53756">
    <property type="entry name" value="UDP-Glycosyltransferase/glycogen phosphorylase"/>
    <property type="match status" value="1"/>
</dbReference>